<name>FMT_RHIEC</name>
<evidence type="ECO:0000255" key="1">
    <source>
        <dbReference type="HAMAP-Rule" id="MF_00182"/>
    </source>
</evidence>
<proteinExistence type="inferred from homology"/>
<protein>
    <recommendedName>
        <fullName evidence="1">Methionyl-tRNA formyltransferase</fullName>
        <ecNumber evidence="1">2.1.2.9</ecNumber>
    </recommendedName>
</protein>
<reference key="1">
    <citation type="journal article" date="2006" name="Proc. Natl. Acad. Sci. U.S.A.">
        <title>The partitioned Rhizobium etli genome: genetic and metabolic redundancy in seven interacting replicons.</title>
        <authorList>
            <person name="Gonzalez V."/>
            <person name="Santamaria R.I."/>
            <person name="Bustos P."/>
            <person name="Hernandez-Gonzalez I."/>
            <person name="Medrano-Soto A."/>
            <person name="Moreno-Hagelsieb G."/>
            <person name="Janga S.C."/>
            <person name="Ramirez M.A."/>
            <person name="Jimenez-Jacinto V."/>
            <person name="Collado-Vides J."/>
            <person name="Davila G."/>
        </authorList>
    </citation>
    <scope>NUCLEOTIDE SEQUENCE [LARGE SCALE GENOMIC DNA]</scope>
    <source>
        <strain>ATCC 51251 / DSM 11541 / JCM 21823 / NBRC 15573 / CFN 42</strain>
    </source>
</reference>
<dbReference type="EC" id="2.1.2.9" evidence="1"/>
<dbReference type="EMBL" id="CP000133">
    <property type="protein sequence ID" value="ABC89236.1"/>
    <property type="molecule type" value="Genomic_DNA"/>
</dbReference>
<dbReference type="RefSeq" id="WP_011423795.1">
    <property type="nucleotide sequence ID" value="NC_007761.1"/>
</dbReference>
<dbReference type="SMR" id="Q2KD50"/>
<dbReference type="KEGG" id="ret:RHE_CH00414"/>
<dbReference type="eggNOG" id="COG0223">
    <property type="taxonomic scope" value="Bacteria"/>
</dbReference>
<dbReference type="HOGENOM" id="CLU_033347_1_2_5"/>
<dbReference type="OrthoDB" id="9802815at2"/>
<dbReference type="Proteomes" id="UP000001936">
    <property type="component" value="Chromosome"/>
</dbReference>
<dbReference type="GO" id="GO:0005829">
    <property type="term" value="C:cytosol"/>
    <property type="evidence" value="ECO:0007669"/>
    <property type="project" value="TreeGrafter"/>
</dbReference>
<dbReference type="GO" id="GO:0004479">
    <property type="term" value="F:methionyl-tRNA formyltransferase activity"/>
    <property type="evidence" value="ECO:0007669"/>
    <property type="project" value="UniProtKB-UniRule"/>
</dbReference>
<dbReference type="CDD" id="cd08646">
    <property type="entry name" value="FMT_core_Met-tRNA-FMT_N"/>
    <property type="match status" value="1"/>
</dbReference>
<dbReference type="CDD" id="cd08704">
    <property type="entry name" value="Met_tRNA_FMT_C"/>
    <property type="match status" value="1"/>
</dbReference>
<dbReference type="Gene3D" id="3.40.50.12230">
    <property type="match status" value="1"/>
</dbReference>
<dbReference type="HAMAP" id="MF_00182">
    <property type="entry name" value="Formyl_trans"/>
    <property type="match status" value="1"/>
</dbReference>
<dbReference type="InterPro" id="IPR005794">
    <property type="entry name" value="Fmt"/>
</dbReference>
<dbReference type="InterPro" id="IPR005793">
    <property type="entry name" value="Formyl_trans_C"/>
</dbReference>
<dbReference type="InterPro" id="IPR002376">
    <property type="entry name" value="Formyl_transf_N"/>
</dbReference>
<dbReference type="InterPro" id="IPR036477">
    <property type="entry name" value="Formyl_transf_N_sf"/>
</dbReference>
<dbReference type="InterPro" id="IPR011034">
    <property type="entry name" value="Formyl_transferase-like_C_sf"/>
</dbReference>
<dbReference type="InterPro" id="IPR001555">
    <property type="entry name" value="GART_AS"/>
</dbReference>
<dbReference type="InterPro" id="IPR044135">
    <property type="entry name" value="Met-tRNA-FMT_C"/>
</dbReference>
<dbReference type="InterPro" id="IPR041711">
    <property type="entry name" value="Met-tRNA-FMT_N"/>
</dbReference>
<dbReference type="NCBIfam" id="TIGR00460">
    <property type="entry name" value="fmt"/>
    <property type="match status" value="1"/>
</dbReference>
<dbReference type="PANTHER" id="PTHR11138">
    <property type="entry name" value="METHIONYL-TRNA FORMYLTRANSFERASE"/>
    <property type="match status" value="1"/>
</dbReference>
<dbReference type="PANTHER" id="PTHR11138:SF5">
    <property type="entry name" value="METHIONYL-TRNA FORMYLTRANSFERASE, MITOCHONDRIAL"/>
    <property type="match status" value="1"/>
</dbReference>
<dbReference type="Pfam" id="PF02911">
    <property type="entry name" value="Formyl_trans_C"/>
    <property type="match status" value="1"/>
</dbReference>
<dbReference type="Pfam" id="PF00551">
    <property type="entry name" value="Formyl_trans_N"/>
    <property type="match status" value="1"/>
</dbReference>
<dbReference type="SUPFAM" id="SSF50486">
    <property type="entry name" value="FMT C-terminal domain-like"/>
    <property type="match status" value="1"/>
</dbReference>
<dbReference type="SUPFAM" id="SSF53328">
    <property type="entry name" value="Formyltransferase"/>
    <property type="match status" value="1"/>
</dbReference>
<dbReference type="PROSITE" id="PS00373">
    <property type="entry name" value="GART"/>
    <property type="match status" value="1"/>
</dbReference>
<comment type="function">
    <text evidence="1">Attaches a formyl group to the free amino group of methionyl-tRNA(fMet). The formyl group appears to play a dual role in the initiator identity of N-formylmethionyl-tRNA by promoting its recognition by IF2 and preventing the misappropriation of this tRNA by the elongation apparatus.</text>
</comment>
<comment type="catalytic activity">
    <reaction evidence="1">
        <text>L-methionyl-tRNA(fMet) + (6R)-10-formyltetrahydrofolate = N-formyl-L-methionyl-tRNA(fMet) + (6S)-5,6,7,8-tetrahydrofolate + H(+)</text>
        <dbReference type="Rhea" id="RHEA:24380"/>
        <dbReference type="Rhea" id="RHEA-COMP:9952"/>
        <dbReference type="Rhea" id="RHEA-COMP:9953"/>
        <dbReference type="ChEBI" id="CHEBI:15378"/>
        <dbReference type="ChEBI" id="CHEBI:57453"/>
        <dbReference type="ChEBI" id="CHEBI:78530"/>
        <dbReference type="ChEBI" id="CHEBI:78844"/>
        <dbReference type="ChEBI" id="CHEBI:195366"/>
        <dbReference type="EC" id="2.1.2.9"/>
    </reaction>
</comment>
<comment type="similarity">
    <text evidence="1">Belongs to the Fmt family.</text>
</comment>
<keyword id="KW-0648">Protein biosynthesis</keyword>
<keyword id="KW-1185">Reference proteome</keyword>
<keyword id="KW-0808">Transferase</keyword>
<accession>Q2KD50</accession>
<organism>
    <name type="scientific">Rhizobium etli (strain ATCC 51251 / DSM 11541 / JCM 21823 / NBRC 15573 / CFN 42)</name>
    <dbReference type="NCBI Taxonomy" id="347834"/>
    <lineage>
        <taxon>Bacteria</taxon>
        <taxon>Pseudomonadati</taxon>
        <taxon>Pseudomonadota</taxon>
        <taxon>Alphaproteobacteria</taxon>
        <taxon>Hyphomicrobiales</taxon>
        <taxon>Rhizobiaceae</taxon>
        <taxon>Rhizobium/Agrobacterium group</taxon>
        <taxon>Rhizobium</taxon>
    </lineage>
</organism>
<sequence length="311" mass="33247">MSLSIIFMGTPEFSVPTLRLLADAGHRIVAVYTQPPRPGGRRGLDLQKSPVHQAAELLGLPVFTPVNFKDAEERERFAAFKADVAVVVAYGLLLPEAVLNGTRDGCYNGHASLLPRWRGAAPIQRAIMAGDEKTGMMVMKMDKGLDTGPVALSREVEIGPNMTAGELHDRLMQVGAKAMAEAMVKLEMNDLPLTPQPQDGVLYAAKIDKAETRIDFGRDARDVHNHIRGLAPFPGAWFELEIGGKPERVKVLGSELAEGQGTAGQLLTDDLLVGCASGAVRLTRLQKAGGKPLAAADFLRGTPLGAGTRLS</sequence>
<gene>
    <name evidence="1" type="primary">fmt</name>
    <name type="ordered locus">RHE_CH00414</name>
</gene>
<feature type="chain" id="PRO_1000020139" description="Methionyl-tRNA formyltransferase">
    <location>
        <begin position="1"/>
        <end position="311"/>
    </location>
</feature>
<feature type="binding site" evidence="1">
    <location>
        <begin position="112"/>
        <end position="115"/>
    </location>
    <ligand>
        <name>(6S)-5,6,7,8-tetrahydrofolate</name>
        <dbReference type="ChEBI" id="CHEBI:57453"/>
    </ligand>
</feature>